<protein>
    <recommendedName>
        <fullName evidence="1">mRNA cleavage and polyadenylation factor CLP1</fullName>
    </recommendedName>
</protein>
<organism>
    <name type="scientific">Candida albicans (strain SC5314 / ATCC MYA-2876)</name>
    <name type="common">Yeast</name>
    <dbReference type="NCBI Taxonomy" id="237561"/>
    <lineage>
        <taxon>Eukaryota</taxon>
        <taxon>Fungi</taxon>
        <taxon>Dikarya</taxon>
        <taxon>Ascomycota</taxon>
        <taxon>Saccharomycotina</taxon>
        <taxon>Pichiomycetes</taxon>
        <taxon>Debaryomycetaceae</taxon>
        <taxon>Candida/Lodderomyces clade</taxon>
        <taxon>Candida</taxon>
    </lineage>
</organism>
<accession>Q59ST8</accession>
<accession>A0A1D8PJU1</accession>
<keyword id="KW-0067">ATP-binding</keyword>
<keyword id="KW-0507">mRNA processing</keyword>
<keyword id="KW-0547">Nucleotide-binding</keyword>
<keyword id="KW-0539">Nucleus</keyword>
<keyword id="KW-1185">Reference proteome</keyword>
<name>CLP1_CANAL</name>
<gene>
    <name evidence="1" type="primary">CLP1</name>
    <name type="ordered locus">CAALFM_C303840CA</name>
    <name type="ORF">CaO19.14193</name>
    <name type="ORF">CaO19.6931</name>
</gene>
<feature type="chain" id="PRO_0000375199" description="mRNA cleavage and polyadenylation factor CLP1">
    <location>
        <begin position="1"/>
        <end position="489"/>
    </location>
</feature>
<feature type="binding site" evidence="1">
    <location>
        <position position="28"/>
    </location>
    <ligand>
        <name>ATP</name>
        <dbReference type="ChEBI" id="CHEBI:30616"/>
    </ligand>
</feature>
<feature type="binding site" evidence="1">
    <location>
        <begin position="152"/>
        <end position="157"/>
    </location>
    <ligand>
        <name>ATP</name>
        <dbReference type="ChEBI" id="CHEBI:30616"/>
    </ligand>
</feature>
<reference key="1">
    <citation type="journal article" date="2004" name="Proc. Natl. Acad. Sci. U.S.A.">
        <title>The diploid genome sequence of Candida albicans.</title>
        <authorList>
            <person name="Jones T."/>
            <person name="Federspiel N.A."/>
            <person name="Chibana H."/>
            <person name="Dungan J."/>
            <person name="Kalman S."/>
            <person name="Magee B.B."/>
            <person name="Newport G."/>
            <person name="Thorstenson Y.R."/>
            <person name="Agabian N."/>
            <person name="Magee P.T."/>
            <person name="Davis R.W."/>
            <person name="Scherer S."/>
        </authorList>
    </citation>
    <scope>NUCLEOTIDE SEQUENCE [LARGE SCALE GENOMIC DNA]</scope>
    <source>
        <strain>SC5314 / ATCC MYA-2876</strain>
    </source>
</reference>
<reference key="2">
    <citation type="journal article" date="2007" name="Genome Biol.">
        <title>Assembly of the Candida albicans genome into sixteen supercontigs aligned on the eight chromosomes.</title>
        <authorList>
            <person name="van het Hoog M."/>
            <person name="Rast T.J."/>
            <person name="Martchenko M."/>
            <person name="Grindle S."/>
            <person name="Dignard D."/>
            <person name="Hogues H."/>
            <person name="Cuomo C."/>
            <person name="Berriman M."/>
            <person name="Scherer S."/>
            <person name="Magee B.B."/>
            <person name="Whiteway M."/>
            <person name="Chibana H."/>
            <person name="Nantel A."/>
            <person name="Magee P.T."/>
        </authorList>
    </citation>
    <scope>GENOME REANNOTATION</scope>
    <source>
        <strain>SC5314 / ATCC MYA-2876</strain>
    </source>
</reference>
<reference key="3">
    <citation type="journal article" date="2013" name="Genome Biol.">
        <title>Assembly of a phased diploid Candida albicans genome facilitates allele-specific measurements and provides a simple model for repeat and indel structure.</title>
        <authorList>
            <person name="Muzzey D."/>
            <person name="Schwartz K."/>
            <person name="Weissman J.S."/>
            <person name="Sherlock G."/>
        </authorList>
    </citation>
    <scope>NUCLEOTIDE SEQUENCE [LARGE SCALE GENOMIC DNA]</scope>
    <scope>GENOME REANNOTATION</scope>
    <source>
        <strain>SC5314 / ATCC MYA-2876</strain>
    </source>
</reference>
<dbReference type="EMBL" id="CP017625">
    <property type="protein sequence ID" value="AOW28411.1"/>
    <property type="molecule type" value="Genomic_DNA"/>
</dbReference>
<dbReference type="RefSeq" id="XP_712732.1">
    <property type="nucleotide sequence ID" value="XM_707639.1"/>
</dbReference>
<dbReference type="SMR" id="Q59ST8"/>
<dbReference type="FunCoup" id="Q59ST8">
    <property type="interactions" value="850"/>
</dbReference>
<dbReference type="STRING" id="237561.Q59ST8"/>
<dbReference type="EnsemblFungi" id="C3_03840C_A-T">
    <property type="protein sequence ID" value="C3_03840C_A-T-p1"/>
    <property type="gene ID" value="C3_03840C_A"/>
</dbReference>
<dbReference type="GeneID" id="3645628"/>
<dbReference type="KEGG" id="cal:CAALFM_C303840CA"/>
<dbReference type="CGD" id="CAL0000199618">
    <property type="gene designation" value="orf19.14193"/>
</dbReference>
<dbReference type="VEuPathDB" id="FungiDB:C3_03840C_A"/>
<dbReference type="eggNOG" id="KOG2749">
    <property type="taxonomic scope" value="Eukaryota"/>
</dbReference>
<dbReference type="HOGENOM" id="CLU_018195_3_0_1"/>
<dbReference type="InParanoid" id="Q59ST8"/>
<dbReference type="OMA" id="VQYVNCH"/>
<dbReference type="OrthoDB" id="258143at2759"/>
<dbReference type="PRO" id="PR:Q59ST8"/>
<dbReference type="Proteomes" id="UP000000559">
    <property type="component" value="Chromosome 3"/>
</dbReference>
<dbReference type="GO" id="GO:0005849">
    <property type="term" value="C:mRNA cleavage factor complex"/>
    <property type="evidence" value="ECO:0007669"/>
    <property type="project" value="UniProtKB-UniRule"/>
</dbReference>
<dbReference type="GO" id="GO:0005634">
    <property type="term" value="C:nucleus"/>
    <property type="evidence" value="ECO:0000318"/>
    <property type="project" value="GO_Central"/>
</dbReference>
<dbReference type="GO" id="GO:0005524">
    <property type="term" value="F:ATP binding"/>
    <property type="evidence" value="ECO:0007669"/>
    <property type="project" value="UniProtKB-UniRule"/>
</dbReference>
<dbReference type="GO" id="GO:0051731">
    <property type="term" value="F:polynucleotide 5'-hydroxyl-kinase activity"/>
    <property type="evidence" value="ECO:0000318"/>
    <property type="project" value="GO_Central"/>
</dbReference>
<dbReference type="GO" id="GO:0031124">
    <property type="term" value="P:mRNA 3'-end processing"/>
    <property type="evidence" value="ECO:0007669"/>
    <property type="project" value="UniProtKB-UniRule"/>
</dbReference>
<dbReference type="GO" id="GO:0009410">
    <property type="term" value="P:response to xenobiotic stimulus"/>
    <property type="evidence" value="ECO:0000315"/>
    <property type="project" value="CGD"/>
</dbReference>
<dbReference type="GO" id="GO:0006388">
    <property type="term" value="P:tRNA splicing, via endonucleolytic cleavage and ligation"/>
    <property type="evidence" value="ECO:0000318"/>
    <property type="project" value="GO_Central"/>
</dbReference>
<dbReference type="FunFam" id="3.40.50.300:FF:003979">
    <property type="entry name" value="mRNA cleavage and polyadenylation factor CLP1"/>
    <property type="match status" value="1"/>
</dbReference>
<dbReference type="Gene3D" id="2.60.120.1030">
    <property type="entry name" value="Clp1, DNA binding domain"/>
    <property type="match status" value="1"/>
</dbReference>
<dbReference type="Gene3D" id="3.40.50.300">
    <property type="entry name" value="P-loop containing nucleotide triphosphate hydrolases"/>
    <property type="match status" value="1"/>
</dbReference>
<dbReference type="Gene3D" id="2.40.30.330">
    <property type="entry name" value="Pre-mRNA cleavage complex subunit Clp1, C-terminal domain"/>
    <property type="match status" value="1"/>
</dbReference>
<dbReference type="HAMAP" id="MF_03035">
    <property type="entry name" value="Clp1"/>
    <property type="match status" value="1"/>
</dbReference>
<dbReference type="InterPro" id="IPR028606">
    <property type="entry name" value="Clp1"/>
</dbReference>
<dbReference type="InterPro" id="IPR045116">
    <property type="entry name" value="Clp1/Grc3"/>
</dbReference>
<dbReference type="InterPro" id="IPR010655">
    <property type="entry name" value="Clp1_C"/>
</dbReference>
<dbReference type="InterPro" id="IPR038238">
    <property type="entry name" value="Clp1_C_sf"/>
</dbReference>
<dbReference type="InterPro" id="IPR032324">
    <property type="entry name" value="Clp1_N"/>
</dbReference>
<dbReference type="InterPro" id="IPR038239">
    <property type="entry name" value="Clp1_N_sf"/>
</dbReference>
<dbReference type="InterPro" id="IPR032319">
    <property type="entry name" value="CLP1_P"/>
</dbReference>
<dbReference type="InterPro" id="IPR027417">
    <property type="entry name" value="P-loop_NTPase"/>
</dbReference>
<dbReference type="PANTHER" id="PTHR12755">
    <property type="entry name" value="CLEAVAGE/POLYADENYLATION FACTOR IA SUBUNIT CLP1P"/>
    <property type="match status" value="1"/>
</dbReference>
<dbReference type="PANTHER" id="PTHR12755:SF6">
    <property type="entry name" value="POLYRIBONUCLEOTIDE 5'-HYDROXYL-KINASE CLP1"/>
    <property type="match status" value="1"/>
</dbReference>
<dbReference type="Pfam" id="PF06807">
    <property type="entry name" value="Clp1"/>
    <property type="match status" value="1"/>
</dbReference>
<dbReference type="Pfam" id="PF16573">
    <property type="entry name" value="CLP1_N"/>
    <property type="match status" value="1"/>
</dbReference>
<dbReference type="Pfam" id="PF16575">
    <property type="entry name" value="CLP1_P"/>
    <property type="match status" value="1"/>
</dbReference>
<evidence type="ECO:0000255" key="1">
    <source>
        <dbReference type="HAMAP-Rule" id="MF_03035"/>
    </source>
</evidence>
<evidence type="ECO:0000305" key="2"/>
<comment type="function">
    <text evidence="1">Required for endonucleolytic cleavage during polyadenylation-dependent pre-mRNA 3'-end formation.</text>
</comment>
<comment type="subunit">
    <text evidence="1">Component of a pre-mRNA cleavage factor complex. Interacts directly with PCF11.</text>
</comment>
<comment type="subcellular location">
    <subcellularLocation>
        <location evidence="1">Nucleus</location>
    </subcellularLocation>
</comment>
<comment type="similarity">
    <text evidence="1">Belongs to the Clp1 family. Clp1 subfamily.</text>
</comment>
<comment type="caution">
    <text evidence="2">May lack the polyribonucleotide 5'-hydroxyl-kinase and polynucleotide 5'-hydroxyl-kinase activities that are characteristic of the human ortholog.</text>
</comment>
<sequence length="489" mass="54725">MSIPGFGSAEKVNHTASSVTLTIPQSYEWRIEVPFNRILKFKVLTGIVEINGTELANNTEIQLSGTKTYLYSPVTDAVIEYVLVENKDDLSLVSASDEGFVEYLSDESNMDSILNLHMYLESKRQYTKDYNFSSSIDQQQSGPKVLIIGSKYSGKTTVSKILSAYANKMNNTPVLVNLQPRDGVFALPGSLTATPISDSFDVESCNGYGLTTTSGTLVHNPKQPIVKNFGMADFNDNVDFYKLLIEKLGIAVLSRLDQDLNIKNSGVIIDTPALTSKNFDIVESMVSNFLIDNIIVIGNERLAIELTKKFAYKSTQLNIIKLNKSSGCIEVEDRFIRLQQEQTIKEYFNGNFKTRLSPFKTDIELSGLKIYKNVLTKDLLSQMAFLPGGDDFEKDETNPEEDPEKKQLEKYYQAIEDPNSSNLENSIVAITHLPNNDKKLGKDLLNTSVLGYIHVSKFDDQKKRLKVLFPFPGVFPKNVLISTNIGYNE</sequence>
<proteinExistence type="inferred from homology"/>